<protein>
    <recommendedName>
        <fullName>Tyrocidine synthase 1</fullName>
    </recommendedName>
    <alternativeName>
        <fullName>Tyrocidine synthase I</fullName>
    </alternativeName>
    <domain>
        <recommendedName>
            <fullName>ATP-dependent D-phenylalanine adenylase</fullName>
            <shortName>D-PheA</shortName>
        </recommendedName>
        <alternativeName>
            <fullName>D-phenylalanine activase</fullName>
        </alternativeName>
    </domain>
    <domain>
        <recommendedName>
            <fullName>Phenylalanine racemase [ATP-hydrolyzing]</fullName>
            <ecNumber>5.1.1.11</ecNumber>
        </recommendedName>
    </domain>
</protein>
<reference key="1">
    <citation type="journal article" date="1988" name="Nucleic Acids Res.">
        <title>Complete nucleotide sequence of the tycA gene coding the tyrocidine synthetase 1 from Bacillus brevis.</title>
        <authorList>
            <person name="Weckermann R."/>
            <person name="Fuerbass R."/>
            <person name="Marahiel M.A."/>
        </authorList>
    </citation>
    <scope>NUCLEOTIDE SEQUENCE [GENOMIC DNA]</scope>
    <source>
        <strain>ATCC 8185 / DSM 362 / JCM 20017 / IAM 1031 / NBRC 3331 / NCDO 717 / NCIMB 8598 / NRS 751 / BG</strain>
    </source>
</reference>
<reference key="2">
    <citation type="journal article" date="1997" name="J. Bacteriol.">
        <title>The tyrocidine biosynthesis operon of Bacillus brevis: complete nucleotide sequence and biochemical characterization of functional internal adenylation domains.</title>
        <authorList>
            <person name="Mootz H.D."/>
            <person name="Marahiel M.A."/>
        </authorList>
    </citation>
    <scope>NUCLEOTIDE SEQUENCE [GENOMIC DNA]</scope>
    <source>
        <strain>ATCC 8185 / DSM 362 / JCM 20017 / IAM 1031 / NBRC 3331 / NCDO 717 / NCIMB 8598 / NRS 751 / BG</strain>
    </source>
</reference>
<reference key="3">
    <citation type="journal article" date="1987" name="J. Bacteriol.">
        <title>Identification of the promoter for a peptide antibiotic biosynthesis gene from Bacillus brevis and its regulation in Bacillus subtilis.</title>
        <authorList>
            <person name="Marahiel M.A."/>
            <person name="Zuber P."/>
            <person name="Czekay G."/>
            <person name="Losick R."/>
        </authorList>
    </citation>
    <scope>NUCLEOTIDE SEQUENCE [MRNA] OF 1-62</scope>
</reference>
<reference key="4">
    <citation type="journal article" date="1994" name="Biochemistry">
        <title>ATP binding in peptide synthetases: determination of contact sites of the adenine moiety by photoaffinity labeling of tyrocidine synthetase 1 with 2-azidoadenosine triphosphate.</title>
        <authorList>
            <person name="Pavela-Vrancic M."/>
            <person name="Pfeifer E."/>
            <person name="van Liempt H."/>
            <person name="Schafer H.J."/>
            <person name="von Dohren H."/>
            <person name="Kleinkauf H."/>
        </authorList>
    </citation>
    <scope>PROTEIN SEQUENCE OF 374-385; 406-417 AND 484-496</scope>
</reference>
<reference key="5">
    <citation type="journal article" date="1989" name="J. Bacteriol.">
        <title>Gene cluster containing the genes for tyrocidine synthetases 1 and 2 from Bacillus brevis: evidence for an operon.</title>
        <authorList>
            <person name="Mittenhuber G."/>
            <person name="Weckermann R."/>
            <person name="Marahiel M.A."/>
        </authorList>
    </citation>
    <scope>NUCLEOTIDE SEQUENCE [GENOMIC DNA] OF 1018-1088</scope>
    <source>
        <strain>ATCC 8185 / DSM 362 / JCM 20017 / IAM 1031 / NBRC 3331 / NCDO 717 / NCIMB 8598 / NRS 751 / BG</strain>
    </source>
</reference>
<dbReference type="EC" id="5.1.1.11"/>
<dbReference type="EMBL" id="X13237">
    <property type="protein sequence ID" value="CAA31623.1"/>
    <property type="molecule type" value="Genomic_DNA"/>
</dbReference>
<dbReference type="EMBL" id="AF004835">
    <property type="protein sequence ID" value="AAC45928.1"/>
    <property type="molecule type" value="Genomic_DNA"/>
</dbReference>
<dbReference type="EMBL" id="M16442">
    <property type="protein sequence ID" value="AAA22876.1"/>
    <property type="status" value="ALT_FRAME"/>
    <property type="molecule type" value="mRNA"/>
</dbReference>
<dbReference type="PIR" id="A26878">
    <property type="entry name" value="A26878"/>
</dbReference>
<dbReference type="PIR" id="T31074">
    <property type="entry name" value="YGBSTB"/>
</dbReference>
<dbReference type="PDB" id="5N81">
    <property type="method" value="X-ray"/>
    <property type="resolution" value="1.60 A"/>
    <property type="chains" value="A/B=3-418"/>
</dbReference>
<dbReference type="PDB" id="5N82">
    <property type="method" value="X-ray"/>
    <property type="resolution" value="1.71 A"/>
    <property type="chains" value="A=3-418"/>
</dbReference>
<dbReference type="PDB" id="7YWJ">
    <property type="method" value="X-ray"/>
    <property type="resolution" value="1.75 A"/>
    <property type="chains" value="A/B=3-418"/>
</dbReference>
<dbReference type="PDB" id="7YWK">
    <property type="method" value="X-ray"/>
    <property type="resolution" value="1.39 A"/>
    <property type="chains" value="A/B=3-418"/>
</dbReference>
<dbReference type="PDB" id="9BFD">
    <property type="method" value="EM"/>
    <property type="resolution" value="2.97 A"/>
    <property type="chains" value="A=3-1085"/>
</dbReference>
<dbReference type="PDB" id="9BFE">
    <property type="method" value="EM"/>
    <property type="resolution" value="3.23 A"/>
    <property type="chains" value="A=3-1085"/>
</dbReference>
<dbReference type="PDB" id="9BFF">
    <property type="method" value="EM"/>
    <property type="resolution" value="3.31 A"/>
    <property type="chains" value="A=3-1085"/>
</dbReference>
<dbReference type="PDB" id="9BFG">
    <property type="method" value="X-ray"/>
    <property type="resolution" value="2.18 A"/>
    <property type="chains" value="A/B=515-1057"/>
</dbReference>
<dbReference type="PDBsum" id="5N81"/>
<dbReference type="PDBsum" id="5N82"/>
<dbReference type="PDBsum" id="7YWJ"/>
<dbReference type="PDBsum" id="7YWK"/>
<dbReference type="PDBsum" id="9BFD"/>
<dbReference type="PDBsum" id="9BFE"/>
<dbReference type="PDBsum" id="9BFF"/>
<dbReference type="PDBsum" id="9BFG"/>
<dbReference type="EMDB" id="EMD-44493"/>
<dbReference type="EMDB" id="EMD-44494"/>
<dbReference type="EMDB" id="EMD-44495"/>
<dbReference type="SMR" id="P09095"/>
<dbReference type="STRING" id="54914.AV540_22690"/>
<dbReference type="KEGG" id="ag:AAC45928"/>
<dbReference type="UniPathway" id="UPA00180"/>
<dbReference type="GO" id="GO:0005524">
    <property type="term" value="F:ATP binding"/>
    <property type="evidence" value="ECO:0007669"/>
    <property type="project" value="UniProtKB-KW"/>
</dbReference>
<dbReference type="GO" id="GO:0016874">
    <property type="term" value="F:ligase activity"/>
    <property type="evidence" value="ECO:0007669"/>
    <property type="project" value="UniProtKB-KW"/>
</dbReference>
<dbReference type="GO" id="GO:0047462">
    <property type="term" value="F:phenylalanine racemase (ATP-hydrolyzing) activity"/>
    <property type="evidence" value="ECO:0007669"/>
    <property type="project" value="UniProtKB-EC"/>
</dbReference>
<dbReference type="GO" id="GO:0017000">
    <property type="term" value="P:antibiotic biosynthetic process"/>
    <property type="evidence" value="ECO:0007669"/>
    <property type="project" value="UniProtKB-KW"/>
</dbReference>
<dbReference type="GO" id="GO:0008610">
    <property type="term" value="P:lipid biosynthetic process"/>
    <property type="evidence" value="ECO:0007669"/>
    <property type="project" value="UniProtKB-ARBA"/>
</dbReference>
<dbReference type="CDD" id="cd19534">
    <property type="entry name" value="E_NRPS"/>
    <property type="match status" value="1"/>
</dbReference>
<dbReference type="FunFam" id="3.30.300.30:FF:000010">
    <property type="entry name" value="Enterobactin synthetase component F"/>
    <property type="match status" value="1"/>
</dbReference>
<dbReference type="FunFam" id="3.40.50.12780:FF:000012">
    <property type="entry name" value="Non-ribosomal peptide synthetase"/>
    <property type="match status" value="1"/>
</dbReference>
<dbReference type="FunFam" id="3.40.50.980:FF:000001">
    <property type="entry name" value="Non-ribosomal peptide synthetase"/>
    <property type="match status" value="1"/>
</dbReference>
<dbReference type="FunFam" id="2.30.38.10:FF:000001">
    <property type="entry name" value="Non-ribosomal peptide synthetase PvdI"/>
    <property type="match status" value="1"/>
</dbReference>
<dbReference type="FunFam" id="1.10.1200.10:FF:000005">
    <property type="entry name" value="Nonribosomal peptide synthetase 1"/>
    <property type="match status" value="1"/>
</dbReference>
<dbReference type="Gene3D" id="3.30.300.30">
    <property type="match status" value="1"/>
</dbReference>
<dbReference type="Gene3D" id="3.40.50.980">
    <property type="match status" value="2"/>
</dbReference>
<dbReference type="Gene3D" id="1.10.1200.10">
    <property type="entry name" value="ACP-like"/>
    <property type="match status" value="1"/>
</dbReference>
<dbReference type="Gene3D" id="3.30.559.10">
    <property type="entry name" value="Chloramphenicol acetyltransferase-like domain"/>
    <property type="match status" value="1"/>
</dbReference>
<dbReference type="Gene3D" id="2.30.38.10">
    <property type="entry name" value="Luciferase, Domain 3"/>
    <property type="match status" value="1"/>
</dbReference>
<dbReference type="Gene3D" id="3.30.559.30">
    <property type="entry name" value="Nonribosomal peptide synthetase, condensation domain"/>
    <property type="match status" value="1"/>
</dbReference>
<dbReference type="InterPro" id="IPR010071">
    <property type="entry name" value="AA_adenyl_dom"/>
</dbReference>
<dbReference type="InterPro" id="IPR036736">
    <property type="entry name" value="ACP-like_sf"/>
</dbReference>
<dbReference type="InterPro" id="IPR025110">
    <property type="entry name" value="AMP-bd_C"/>
</dbReference>
<dbReference type="InterPro" id="IPR045851">
    <property type="entry name" value="AMP-bd_C_sf"/>
</dbReference>
<dbReference type="InterPro" id="IPR020459">
    <property type="entry name" value="AMP-binding"/>
</dbReference>
<dbReference type="InterPro" id="IPR020845">
    <property type="entry name" value="AMP-binding_CS"/>
</dbReference>
<dbReference type="InterPro" id="IPR000873">
    <property type="entry name" value="AMP-dep_synth/lig_dom"/>
</dbReference>
<dbReference type="InterPro" id="IPR023213">
    <property type="entry name" value="CAT-like_dom_sf"/>
</dbReference>
<dbReference type="InterPro" id="IPR001242">
    <property type="entry name" value="Condensatn"/>
</dbReference>
<dbReference type="InterPro" id="IPR010060">
    <property type="entry name" value="NRPS_synth"/>
</dbReference>
<dbReference type="InterPro" id="IPR009081">
    <property type="entry name" value="PP-bd_ACP"/>
</dbReference>
<dbReference type="InterPro" id="IPR006162">
    <property type="entry name" value="Ppantetheine_attach_site"/>
</dbReference>
<dbReference type="NCBIfam" id="TIGR01733">
    <property type="entry name" value="AA-adenyl-dom"/>
    <property type="match status" value="1"/>
</dbReference>
<dbReference type="NCBIfam" id="TIGR01720">
    <property type="entry name" value="NRPS-para261"/>
    <property type="match status" value="1"/>
</dbReference>
<dbReference type="PANTHER" id="PTHR45398">
    <property type="match status" value="1"/>
</dbReference>
<dbReference type="PANTHER" id="PTHR45398:SF1">
    <property type="entry name" value="ENZYME, PUTATIVE (JCVI)-RELATED"/>
    <property type="match status" value="1"/>
</dbReference>
<dbReference type="Pfam" id="PF00501">
    <property type="entry name" value="AMP-binding"/>
    <property type="match status" value="1"/>
</dbReference>
<dbReference type="Pfam" id="PF13193">
    <property type="entry name" value="AMP-binding_C"/>
    <property type="match status" value="1"/>
</dbReference>
<dbReference type="Pfam" id="PF00668">
    <property type="entry name" value="Condensation"/>
    <property type="match status" value="1"/>
</dbReference>
<dbReference type="Pfam" id="PF00550">
    <property type="entry name" value="PP-binding"/>
    <property type="match status" value="1"/>
</dbReference>
<dbReference type="PRINTS" id="PR00154">
    <property type="entry name" value="AMPBINDING"/>
</dbReference>
<dbReference type="SUPFAM" id="SSF56801">
    <property type="entry name" value="Acetyl-CoA synthetase-like"/>
    <property type="match status" value="1"/>
</dbReference>
<dbReference type="SUPFAM" id="SSF47336">
    <property type="entry name" value="ACP-like"/>
    <property type="match status" value="1"/>
</dbReference>
<dbReference type="SUPFAM" id="SSF52777">
    <property type="entry name" value="CoA-dependent acyltransferases"/>
    <property type="match status" value="2"/>
</dbReference>
<dbReference type="PROSITE" id="PS00455">
    <property type="entry name" value="AMP_BINDING"/>
    <property type="match status" value="1"/>
</dbReference>
<dbReference type="PROSITE" id="PS50075">
    <property type="entry name" value="CARRIER"/>
    <property type="match status" value="1"/>
</dbReference>
<dbReference type="PROSITE" id="PS00012">
    <property type="entry name" value="PHOSPHOPANTETHEINE"/>
    <property type="match status" value="1"/>
</dbReference>
<comment type="function">
    <text>In the first step of peptide synthesis this enzyme activates phenylalanine and racemizes it to the D-isomer.</text>
</comment>
<comment type="catalytic activity">
    <reaction>
        <text>L-phenylalanine + ATP + H2O = D-phenylalanine + AMP + diphosphate + H(+)</text>
        <dbReference type="Rhea" id="RHEA:20201"/>
        <dbReference type="ChEBI" id="CHEBI:15377"/>
        <dbReference type="ChEBI" id="CHEBI:15378"/>
        <dbReference type="ChEBI" id="CHEBI:30616"/>
        <dbReference type="ChEBI" id="CHEBI:33019"/>
        <dbReference type="ChEBI" id="CHEBI:57981"/>
        <dbReference type="ChEBI" id="CHEBI:58095"/>
        <dbReference type="ChEBI" id="CHEBI:456215"/>
        <dbReference type="EC" id="5.1.1.11"/>
    </reaction>
</comment>
<comment type="cofactor">
    <cofactor evidence="2">
        <name>pantetheine 4'-phosphate</name>
        <dbReference type="ChEBI" id="CHEBI:47942"/>
    </cofactor>
    <text evidence="2">Binds 1 phosphopantetheine covalently.</text>
</comment>
<comment type="pathway">
    <text>Antibiotic biosynthesis; tyrocidine biosynthesis.</text>
</comment>
<comment type="subunit">
    <text>Large multienzyme complex of TycA, TycB and TycC.</text>
</comment>
<comment type="domain">
    <text>One-module-bearing peptide synthase with a C-terminal epimerization domain. Each module incorporates one amino acid into the peptide product and can be further subdivided into domains responsible for substrate adenylation, thiolation, condensation (not for the initiation module), and epimerization (optional), and N methylation (optional).</text>
</comment>
<comment type="miscellaneous">
    <text>Tyrocidine is a mixture of four cyclic decapeptides, tyrocidine A (D-Phe-Pro-Phe-D-Phe-Asn-Gln-Tyr-Val-Orn-Leu), B, C, and D, in which Phe, at positions 3, 4, and Tyr residues are gradually replaced by Trp, depending on the relative concentrations of these amino acids in the growth medium.</text>
</comment>
<comment type="similarity">
    <text evidence="2">Belongs to the ATP-dependent AMP-binding enzyme family.</text>
</comment>
<proteinExistence type="evidence at protein level"/>
<sequence>MLANQANLIDNKRELEQHALVPYAQGKSIHQLFEEQAEAFPDRVAIVFENRRLSYQELNRKANQLARALLEKGVQTDSIVGVMMEKSIENVIAILAVLKAGGAYVPIDIEYPRDRIQYILQDSQTKIVLTQKSVSQLVHDVGYSGEVVVLDEEQLDARETANLHQPSKPTDLAYVIYTSGTTGKPKGTMLEHKGIANLQSFFQNSFGVTEQDRIGLFASMSFDASVWEMFMALLSGASLYILSKQTIHDFAAFEHYLSENELTIITLPPTYLTHLTPERITSLRIMITAGSASSAPLVNKWKDKLRYINAYGPTETSICATIWEAPSNQLSVQSVPIGKPIQNTHIYIVNEDLQLLPTGSEGELCIGGVGLARGYWNRPDLTAEKFVDNPFVPGEKMYRTGDLAKWLTDGTIEFLGRIDHQVKIRGHRIELGEIESVLLAHEHITEAVVIAREDQHAGQYLCAYYISQQEATPAQLRDYAAQKLPAYMLPSYFVKLDKMPLTPNDKIDRKALPEPDLTANQSQAAYHPPRTETESILVSIWQNVLGIEKIGIRDNFYSLGGDSIQAIQVVARLHSYQLKLETKDLLNYPTIEQVALFVKSTTRKSDQGIIAGNVPLTPIQKWFFGKNFTNTGHWNQSSVLYRPEGFDPKVIQSVMDKIIEHHDALRMVYQHENGNVVQHNRGLGGQLYDFFSYNLTAQPDVQQAIEAETQRLHSSMNLQEGPLVKVALFQTLHGDHLFLAIHHLVVDGISWRILFEDLATGYAQALAGQAISLPEKTDSFQSWSQWLQEYANEADLLSEIPYWESLESQAKNVSLPKDYEVTDCKQKSVRNMRIRLHPEETEQLLKHANQAYQTEINDLLLAALGLAFAEWSKLAQIVIHLEGHGREDIIEQANVARTVGWFTSQYPVLLDLKQTAPLSDYIKLTKENMRKIPRKGIGYDILKHVTLPENRGSLSFRVQPEVTFNYLGQFDADMRTELFTRSPYSGGNTLGADGKNNLSPESEVYTALNITGLIEGGELVLTFSYSSEQYREESIQQLSQSYQKHLLAIIAHCTEKKEVERTPSDFSVKGLQMEEMDDIFELLANTLR</sequence>
<feature type="chain" id="PRO_0000193093" description="Tyrocidine synthase 1">
    <location>
        <begin position="1"/>
        <end position="1088"/>
    </location>
</feature>
<feature type="domain" description="Carrier" evidence="1">
    <location>
        <begin position="528"/>
        <end position="602"/>
    </location>
</feature>
<feature type="modified residue" description="O-(pantetheine 4'-phosphoryl)serine" evidence="1">
    <location>
        <position position="563"/>
    </location>
</feature>
<feature type="sequence conflict" description="In Ref. 1; CAA31623." evidence="2" ref="1">
    <original>NLQSFFQNSFGVTEQDRIGLFASMSFDASVWEMFMALLSGASLYIL</original>
    <variation>ICNPFSKIRLASPSKTGSGFLPACRSTHPFGKCSWLCCLAPRVHP</variation>
    <location>
        <begin position="197"/>
        <end position="242"/>
    </location>
</feature>
<feature type="sequence conflict" description="In Ref. 1; CAA31623." evidence="2" ref="1">
    <original>GS</original>
    <variation>AD</variation>
    <location>
        <begin position="359"/>
        <end position="360"/>
    </location>
</feature>
<feature type="sequence conflict" description="In Ref. 4; AA sequence." evidence="2" ref="4">
    <original>L</original>
    <variation>I</variation>
    <location>
        <position position="496"/>
    </location>
</feature>
<feature type="sequence conflict" description="In Ref. 1; CAA31623." evidence="2" ref="1">
    <original>L</original>
    <variation>V</variation>
    <location>
        <position position="665"/>
    </location>
</feature>
<feature type="sequence conflict" description="In Ref. 1; CAA31623." evidence="2" ref="1">
    <original>L</original>
    <variation>F</variation>
    <location>
        <position position="737"/>
    </location>
</feature>
<feature type="sequence conflict" description="In Ref. 1; CAA31623." evidence="2" ref="1">
    <original>EDLATGYAQALAGQAISLPEKTDSFQSWSQWLQEY</original>
    <variation>KIWQPDTRRHLQGKRSVCPKKRILFKAGHNGCKNN</variation>
    <location>
        <begin position="756"/>
        <end position="790"/>
    </location>
</feature>
<feature type="sequence conflict" description="In Ref. 1; CAA31623." evidence="2" ref="1">
    <original>QIVIHLEGHGREDIIEQAN</original>
    <variation>KSSFIWRGTGARTSSNRQT</variation>
    <location>
        <begin position="876"/>
        <end position="894"/>
    </location>
</feature>
<feature type="helix" evidence="5">
    <location>
        <begin position="29"/>
        <end position="39"/>
    </location>
</feature>
<feature type="strand" evidence="5">
    <location>
        <begin position="43"/>
        <end position="48"/>
    </location>
</feature>
<feature type="strand" evidence="5">
    <location>
        <begin position="51"/>
        <end position="54"/>
    </location>
</feature>
<feature type="helix" evidence="5">
    <location>
        <begin position="55"/>
        <end position="71"/>
    </location>
</feature>
<feature type="strand" evidence="5">
    <location>
        <begin position="79"/>
        <end position="82"/>
    </location>
</feature>
<feature type="helix" evidence="5">
    <location>
        <begin position="88"/>
        <end position="99"/>
    </location>
</feature>
<feature type="strand" evidence="5">
    <location>
        <begin position="103"/>
        <end position="106"/>
    </location>
</feature>
<feature type="helix" evidence="5">
    <location>
        <begin position="113"/>
        <end position="123"/>
    </location>
</feature>
<feature type="strand" evidence="5">
    <location>
        <begin position="126"/>
        <end position="130"/>
    </location>
</feature>
<feature type="helix" evidence="5">
    <location>
        <begin position="132"/>
        <end position="134"/>
    </location>
</feature>
<feature type="helix" evidence="5">
    <location>
        <begin position="135"/>
        <end position="140"/>
    </location>
</feature>
<feature type="strand" evidence="5">
    <location>
        <begin position="145"/>
        <end position="149"/>
    </location>
</feature>
<feature type="helix" evidence="5">
    <location>
        <begin position="150"/>
        <end position="152"/>
    </location>
</feature>
<feature type="strand" evidence="5">
    <location>
        <begin position="171"/>
        <end position="178"/>
    </location>
</feature>
<feature type="strand" evidence="5">
    <location>
        <begin position="181"/>
        <end position="183"/>
    </location>
</feature>
<feature type="strand" evidence="5">
    <location>
        <begin position="186"/>
        <end position="191"/>
    </location>
</feature>
<feature type="helix" evidence="5">
    <location>
        <begin position="192"/>
        <end position="205"/>
    </location>
</feature>
<feature type="strand" evidence="5">
    <location>
        <begin position="213"/>
        <end position="216"/>
    </location>
</feature>
<feature type="helix" evidence="5">
    <location>
        <begin position="223"/>
        <end position="233"/>
    </location>
</feature>
<feature type="turn" evidence="5">
    <location>
        <begin position="234"/>
        <end position="236"/>
    </location>
</feature>
<feature type="strand" evidence="5">
    <location>
        <begin position="238"/>
        <end position="241"/>
    </location>
</feature>
<feature type="helix" evidence="5">
    <location>
        <begin position="244"/>
        <end position="248"/>
    </location>
</feature>
<feature type="helix" evidence="5">
    <location>
        <begin position="250"/>
        <end position="259"/>
    </location>
</feature>
<feature type="strand" evidence="5">
    <location>
        <begin position="264"/>
        <end position="267"/>
    </location>
</feature>
<feature type="helix" evidence="5">
    <location>
        <begin position="269"/>
        <end position="272"/>
    </location>
</feature>
<feature type="helix" evidence="5">
    <location>
        <begin position="277"/>
        <end position="279"/>
    </location>
</feature>
<feature type="strand" evidence="5">
    <location>
        <begin position="284"/>
        <end position="291"/>
    </location>
</feature>
<feature type="helix" evidence="4">
    <location>
        <begin position="292"/>
        <end position="294"/>
    </location>
</feature>
<feature type="helix" evidence="5">
    <location>
        <begin position="295"/>
        <end position="301"/>
    </location>
</feature>
<feature type="turn" evidence="5">
    <location>
        <begin position="302"/>
        <end position="304"/>
    </location>
</feature>
<feature type="strand" evidence="5">
    <location>
        <begin position="305"/>
        <end position="311"/>
    </location>
</feature>
<feature type="helix" evidence="5">
    <location>
        <begin position="314"/>
        <end position="316"/>
    </location>
</feature>
<feature type="strand" evidence="5">
    <location>
        <begin position="320"/>
        <end position="324"/>
    </location>
</feature>
<feature type="strand" evidence="5">
    <location>
        <begin position="338"/>
        <end position="340"/>
    </location>
</feature>
<feature type="strand" evidence="5">
    <location>
        <begin position="344"/>
        <end position="349"/>
    </location>
</feature>
<feature type="strand" evidence="5">
    <location>
        <begin position="362"/>
        <end position="368"/>
    </location>
</feature>
<feature type="helix" evidence="5">
    <location>
        <begin position="379"/>
        <end position="385"/>
    </location>
</feature>
<feature type="strand" evidence="5">
    <location>
        <begin position="386"/>
        <end position="388"/>
    </location>
</feature>
<feature type="strand" evidence="3">
    <location>
        <begin position="390"/>
        <end position="392"/>
    </location>
</feature>
<feature type="strand" evidence="5">
    <location>
        <begin position="396"/>
        <end position="406"/>
    </location>
</feature>
<feature type="strand" evidence="5">
    <location>
        <begin position="412"/>
        <end position="417"/>
    </location>
</feature>
<feature type="helix" evidence="6">
    <location>
        <begin position="532"/>
        <end position="544"/>
    </location>
</feature>
<feature type="turn" evidence="6">
    <location>
        <begin position="556"/>
        <end position="560"/>
    </location>
</feature>
<feature type="helix" evidence="6">
    <location>
        <begin position="563"/>
        <end position="574"/>
    </location>
</feature>
<feature type="turn" evidence="6">
    <location>
        <begin position="575"/>
        <end position="577"/>
    </location>
</feature>
<feature type="helix" evidence="6">
    <location>
        <begin position="582"/>
        <end position="587"/>
    </location>
</feature>
<feature type="helix" evidence="6">
    <location>
        <begin position="591"/>
        <end position="594"/>
    </location>
</feature>
<feature type="turn" evidence="6">
    <location>
        <begin position="595"/>
        <end position="597"/>
    </location>
</feature>
<feature type="strand" evidence="6">
    <location>
        <begin position="612"/>
        <end position="614"/>
    </location>
</feature>
<feature type="helix" evidence="6">
    <location>
        <begin position="618"/>
        <end position="625"/>
    </location>
</feature>
<feature type="turn" evidence="6">
    <location>
        <begin position="629"/>
        <end position="632"/>
    </location>
</feature>
<feature type="strand" evidence="6">
    <location>
        <begin position="634"/>
        <end position="642"/>
    </location>
</feature>
<feature type="helix" evidence="6">
    <location>
        <begin position="648"/>
        <end position="661"/>
    </location>
</feature>
<feature type="helix" evidence="6">
    <location>
        <begin position="663"/>
        <end position="666"/>
    </location>
</feature>
<feature type="strand" evidence="6">
    <location>
        <begin position="667"/>
        <end position="672"/>
    </location>
</feature>
<feature type="strand" evidence="6">
    <location>
        <begin position="675"/>
        <end position="680"/>
    </location>
</feature>
<feature type="strand" evidence="6">
    <location>
        <begin position="683"/>
        <end position="685"/>
    </location>
</feature>
<feature type="strand" evidence="6">
    <location>
        <begin position="689"/>
        <end position="694"/>
    </location>
</feature>
<feature type="helix" evidence="6">
    <location>
        <begin position="701"/>
        <end position="713"/>
    </location>
</feature>
<feature type="strand" evidence="6">
    <location>
        <begin position="718"/>
        <end position="721"/>
    </location>
</feature>
<feature type="strand" evidence="6">
    <location>
        <begin position="723"/>
        <end position="731"/>
    </location>
</feature>
<feature type="strand" evidence="6">
    <location>
        <begin position="734"/>
        <end position="742"/>
    </location>
</feature>
<feature type="helix" evidence="6">
    <location>
        <begin position="743"/>
        <end position="745"/>
    </location>
</feature>
<feature type="helix" evidence="6">
    <location>
        <begin position="748"/>
        <end position="766"/>
    </location>
</feature>
<feature type="helix" evidence="6">
    <location>
        <begin position="780"/>
        <end position="790"/>
    </location>
</feature>
<feature type="helix" evidence="6">
    <location>
        <begin position="794"/>
        <end position="797"/>
    </location>
</feature>
<feature type="helix" evidence="6">
    <location>
        <begin position="800"/>
        <end position="810"/>
    </location>
</feature>
<feature type="helix" evidence="6">
    <location>
        <begin position="826"/>
        <end position="828"/>
    </location>
</feature>
<feature type="strand" evidence="6">
    <location>
        <begin position="829"/>
        <end position="835"/>
    </location>
</feature>
<feature type="helix" evidence="6">
    <location>
        <begin position="838"/>
        <end position="846"/>
    </location>
</feature>
<feature type="helix" evidence="6">
    <location>
        <begin position="848"/>
        <end position="850"/>
    </location>
</feature>
<feature type="turn" evidence="6">
    <location>
        <begin position="851"/>
        <end position="853"/>
    </location>
</feature>
<feature type="helix" evidence="6">
    <location>
        <begin position="856"/>
        <end position="871"/>
    </location>
</feature>
<feature type="strand" evidence="6">
    <location>
        <begin position="875"/>
        <end position="883"/>
    </location>
</feature>
<feature type="strand" evidence="6">
    <location>
        <begin position="904"/>
        <end position="911"/>
    </location>
</feature>
<feature type="helix" evidence="6">
    <location>
        <begin position="918"/>
        <end position="931"/>
    </location>
</feature>
<feature type="helix" evidence="6">
    <location>
        <begin position="933"/>
        <end position="936"/>
    </location>
</feature>
<feature type="helix" evidence="6">
    <location>
        <begin position="938"/>
        <end position="944"/>
    </location>
</feature>
<feature type="helix" evidence="6">
    <location>
        <begin position="948"/>
        <end position="950"/>
    </location>
</feature>
<feature type="strand" evidence="6">
    <location>
        <begin position="961"/>
        <end position="969"/>
    </location>
</feature>
<feature type="helix" evidence="6">
    <location>
        <begin position="971"/>
        <end position="974"/>
    </location>
</feature>
<feature type="helix" evidence="6">
    <location>
        <begin position="995"/>
        <end position="997"/>
    </location>
</feature>
<feature type="strand" evidence="6">
    <location>
        <begin position="1007"/>
        <end position="1015"/>
    </location>
</feature>
<feature type="strand" evidence="6">
    <location>
        <begin position="1018"/>
        <end position="1026"/>
    </location>
</feature>
<feature type="turn" evidence="6">
    <location>
        <begin position="1027"/>
        <end position="1029"/>
    </location>
</feature>
<feature type="helix" evidence="6">
    <location>
        <begin position="1032"/>
        <end position="1054"/>
    </location>
</feature>
<name>TYCA_BREPA</name>
<evidence type="ECO:0000255" key="1">
    <source>
        <dbReference type="PROSITE-ProRule" id="PRU00258"/>
    </source>
</evidence>
<evidence type="ECO:0000305" key="2"/>
<evidence type="ECO:0007829" key="3">
    <source>
        <dbReference type="PDB" id="5N81"/>
    </source>
</evidence>
<evidence type="ECO:0007829" key="4">
    <source>
        <dbReference type="PDB" id="7YWJ"/>
    </source>
</evidence>
<evidence type="ECO:0007829" key="5">
    <source>
        <dbReference type="PDB" id="7YWK"/>
    </source>
</evidence>
<evidence type="ECO:0007829" key="6">
    <source>
        <dbReference type="PDB" id="9BFG"/>
    </source>
</evidence>
<accession>P09095</accession>
<accession>O30407</accession>
<keyword id="KW-0002">3D-structure</keyword>
<keyword id="KW-0045">Antibiotic biosynthesis</keyword>
<keyword id="KW-0067">ATP-binding</keyword>
<keyword id="KW-0903">Direct protein sequencing</keyword>
<keyword id="KW-0413">Isomerase</keyword>
<keyword id="KW-0436">Ligase</keyword>
<keyword id="KW-0511">Multifunctional enzyme</keyword>
<keyword id="KW-0547">Nucleotide-binding</keyword>
<keyword id="KW-0596">Phosphopantetheine</keyword>
<keyword id="KW-0597">Phosphoprotein</keyword>
<gene>
    <name type="primary">tycA</name>
</gene>
<organism>
    <name type="scientific">Brevibacillus parabrevis</name>
    <dbReference type="NCBI Taxonomy" id="54914"/>
    <lineage>
        <taxon>Bacteria</taxon>
        <taxon>Bacillati</taxon>
        <taxon>Bacillota</taxon>
        <taxon>Bacilli</taxon>
        <taxon>Bacillales</taxon>
        <taxon>Paenibacillaceae</taxon>
        <taxon>Brevibacillus</taxon>
    </lineage>
</organism>